<feature type="chain" id="PRO_0000435387" description="Probable aldehyde oxidase gad-3" evidence="6">
    <location>
        <begin position="1"/>
        <end position="1257"/>
    </location>
</feature>
<feature type="domain" description="2Fe-2S ferredoxin-type" evidence="3">
    <location>
        <begin position="4"/>
        <end position="91"/>
    </location>
</feature>
<feature type="domain" description="FAD-binding PCMH-type" evidence="4">
    <location>
        <begin position="229"/>
        <end position="459"/>
    </location>
</feature>
<feature type="active site" description="Proton acceptor" evidence="1">
    <location>
        <position position="1208"/>
    </location>
</feature>
<feature type="binding site" evidence="3">
    <location>
        <position position="43"/>
    </location>
    <ligand>
        <name>[2Fe-2S] cluster</name>
        <dbReference type="ChEBI" id="CHEBI:190135"/>
    </ligand>
</feature>
<feature type="binding site" evidence="3">
    <location>
        <position position="48"/>
    </location>
    <ligand>
        <name>[2Fe-2S] cluster</name>
        <dbReference type="ChEBI" id="CHEBI:190135"/>
    </ligand>
</feature>
<feature type="binding site" evidence="3">
    <location>
        <position position="51"/>
    </location>
    <ligand>
        <name>[2Fe-2S] cluster</name>
        <dbReference type="ChEBI" id="CHEBI:190135"/>
    </ligand>
</feature>
<feature type="binding site" evidence="3">
    <location>
        <position position="73"/>
    </location>
    <ligand>
        <name>[2Fe-2S] cluster</name>
        <dbReference type="ChEBI" id="CHEBI:190135"/>
    </ligand>
</feature>
<name>GAD3_CAEEL</name>
<comment type="function">
    <text evidence="5">May be involved in the metabolism of 1-methylnicotinamide (MNA). Linked to regulation of longevity through generation of reactive oxygen species, where it probably functions in a pathway downstream of the sirtuin sir-2.1 and the nicotinamide N-methyltransferase anmt-1.</text>
</comment>
<comment type="catalytic activity">
    <reaction evidence="2">
        <text>an aldehyde + O2 + H2O = a carboxylate + H2O2 + H(+)</text>
        <dbReference type="Rhea" id="RHEA:16829"/>
        <dbReference type="ChEBI" id="CHEBI:15377"/>
        <dbReference type="ChEBI" id="CHEBI:15378"/>
        <dbReference type="ChEBI" id="CHEBI:15379"/>
        <dbReference type="ChEBI" id="CHEBI:16240"/>
        <dbReference type="ChEBI" id="CHEBI:17478"/>
        <dbReference type="ChEBI" id="CHEBI:29067"/>
        <dbReference type="EC" id="1.2.3.1"/>
    </reaction>
</comment>
<comment type="cofactor">
    <cofactor evidence="2">
        <name>[2Fe-2S] cluster</name>
        <dbReference type="ChEBI" id="CHEBI:190135"/>
    </cofactor>
    <text evidence="2">Binds 2 [2Fe-2S] clusters per subunit.</text>
</comment>
<comment type="cofactor">
    <cofactor evidence="2">
        <name>FAD</name>
        <dbReference type="ChEBI" id="CHEBI:57692"/>
    </cofactor>
    <text evidence="2">Binds 1 FAD per subunit.</text>
</comment>
<comment type="cofactor">
    <cofactor evidence="2">
        <name>Mo-molybdopterin</name>
        <dbReference type="ChEBI" id="CHEBI:71302"/>
    </cofactor>
    <text evidence="2">Binds 1 Mo-molybdopterin (Mo-MPT) cofactor per subunit.</text>
</comment>
<comment type="disruption phenotype">
    <text evidence="5">RNAi-mediated knockdown reduces both the longevity-extending effects and generation of reactive oxygen species when exposed to 1 microM N1-methylnicotinamide.</text>
</comment>
<comment type="similarity">
    <text evidence="6">Belongs to the xanthine dehydrogenase family.</text>
</comment>
<organism evidence="7">
    <name type="scientific">Caenorhabditis elegans</name>
    <dbReference type="NCBI Taxonomy" id="6239"/>
    <lineage>
        <taxon>Eukaryota</taxon>
        <taxon>Metazoa</taxon>
        <taxon>Ecdysozoa</taxon>
        <taxon>Nematoda</taxon>
        <taxon>Chromadorea</taxon>
        <taxon>Rhabditida</taxon>
        <taxon>Rhabditina</taxon>
        <taxon>Rhabditomorpha</taxon>
        <taxon>Rhabditoidea</taxon>
        <taxon>Rhabditidae</taxon>
        <taxon>Peloderinae</taxon>
        <taxon>Caenorhabditis</taxon>
    </lineage>
</organism>
<evidence type="ECO:0000250" key="1">
    <source>
        <dbReference type="UniProtKB" id="P47989"/>
    </source>
</evidence>
<evidence type="ECO:0000250" key="2">
    <source>
        <dbReference type="UniProtKB" id="Q06278"/>
    </source>
</evidence>
<evidence type="ECO:0000255" key="3">
    <source>
        <dbReference type="PROSITE-ProRule" id="PRU00465"/>
    </source>
</evidence>
<evidence type="ECO:0000255" key="4">
    <source>
        <dbReference type="PROSITE-ProRule" id="PRU00718"/>
    </source>
</evidence>
<evidence type="ECO:0000269" key="5">
    <source>
    </source>
</evidence>
<evidence type="ECO:0000305" key="6"/>
<evidence type="ECO:0000312" key="7">
    <source>
        <dbReference type="Proteomes" id="UP000001940"/>
    </source>
</evidence>
<evidence type="ECO:0000312" key="8">
    <source>
        <dbReference type="WormBase" id="B0222.9"/>
    </source>
</evidence>
<gene>
    <name evidence="8" type="primary">gad-3</name>
    <name evidence="8" type="ORF">B0222.9</name>
</gene>
<proteinExistence type="inferred from homology"/>
<reference evidence="7" key="1">
    <citation type="journal article" date="1998" name="Science">
        <title>Genome sequence of the nematode C. elegans: a platform for investigating biology.</title>
        <authorList>
            <consortium name="The C. elegans sequencing consortium"/>
        </authorList>
    </citation>
    <scope>NUCLEOTIDE SEQUENCE [LARGE SCALE GENOMIC DNA]</scope>
    <source>
        <strain evidence="7">Bristol N2</strain>
    </source>
</reference>
<reference evidence="6" key="2">
    <citation type="journal article" date="2013" name="Nat. Chem. Biol.">
        <title>Role of sirtuins in lifespan regulation is linked to methylation of nicotinamide.</title>
        <authorList>
            <person name="Schmeisser K."/>
            <person name="Mansfeld J."/>
            <person name="Kuhlow D."/>
            <person name="Weimer S."/>
            <person name="Priebe S."/>
            <person name="Heiland I."/>
            <person name="Birringer M."/>
            <person name="Groth M."/>
            <person name="Segref A."/>
            <person name="Kanfi Y."/>
            <person name="Price N.L."/>
            <person name="Schmeisser S."/>
            <person name="Schuster S."/>
            <person name="Pfeiffer A.F."/>
            <person name="Guthke R."/>
            <person name="Platzer M."/>
            <person name="Hoppe T."/>
            <person name="Cohen H.Y."/>
            <person name="Zarse K."/>
            <person name="Sinclair D.A."/>
            <person name="Ristow M."/>
        </authorList>
    </citation>
    <scope>FUNCTION</scope>
    <scope>DISRUPTION PHENOTYPE</scope>
</reference>
<keyword id="KW-0001">2Fe-2S</keyword>
<keyword id="KW-0408">Iron</keyword>
<keyword id="KW-0411">Iron-sulfur</keyword>
<keyword id="KW-0479">Metal-binding</keyword>
<keyword id="KW-0520">NAD</keyword>
<keyword id="KW-0560">Oxidoreductase</keyword>
<keyword id="KW-1185">Reference proteome</keyword>
<dbReference type="EC" id="1.2.3.1" evidence="2"/>
<dbReference type="EMBL" id="BX284605">
    <property type="protein sequence ID" value="CCD61422.2"/>
    <property type="molecule type" value="Genomic_DNA"/>
</dbReference>
<dbReference type="RefSeq" id="NP_001294662.1">
    <property type="nucleotide sequence ID" value="NM_001307733.3"/>
</dbReference>
<dbReference type="SMR" id="Q960A1"/>
<dbReference type="FunCoup" id="Q960A1">
    <property type="interactions" value="158"/>
</dbReference>
<dbReference type="STRING" id="6239.B0222.9.1"/>
<dbReference type="PaxDb" id="6239-B0222.9"/>
<dbReference type="PeptideAtlas" id="Q960A1"/>
<dbReference type="EnsemblMetazoa" id="B0222.9.1">
    <property type="protein sequence ID" value="B0222.9.1"/>
    <property type="gene ID" value="WBGene00015057"/>
</dbReference>
<dbReference type="GeneID" id="24104108"/>
<dbReference type="KEGG" id="cel:CELE_B0222.9"/>
<dbReference type="UCSC" id="B0222.9">
    <property type="organism name" value="c. elegans"/>
</dbReference>
<dbReference type="AGR" id="WB:WBGene00015057"/>
<dbReference type="CTD" id="24104108"/>
<dbReference type="WormBase" id="B0222.9">
    <property type="protein sequence ID" value="CE48200"/>
    <property type="gene ID" value="WBGene00015057"/>
    <property type="gene designation" value="gad-3"/>
</dbReference>
<dbReference type="eggNOG" id="KOG0430">
    <property type="taxonomic scope" value="Eukaryota"/>
</dbReference>
<dbReference type="GeneTree" id="ENSGT00970000196578"/>
<dbReference type="HOGENOM" id="CLU_001681_1_2_1"/>
<dbReference type="InParanoid" id="Q960A1"/>
<dbReference type="OMA" id="GWSKDHS"/>
<dbReference type="OrthoDB" id="8300278at2759"/>
<dbReference type="BRENDA" id="1.2.3.1">
    <property type="organism ID" value="1045"/>
</dbReference>
<dbReference type="Reactome" id="R-CEL-964975">
    <property type="pathway name" value="Vitamin B6 activation to pyridoxal phosphate"/>
</dbReference>
<dbReference type="PRO" id="PR:Q960A1"/>
<dbReference type="Proteomes" id="UP000001940">
    <property type="component" value="Chromosome V"/>
</dbReference>
<dbReference type="Bgee" id="WBGene00015057">
    <property type="expression patterns" value="Expressed in material anatomical entity and 3 other cell types or tissues"/>
</dbReference>
<dbReference type="GO" id="GO:0051537">
    <property type="term" value="F:2 iron, 2 sulfur cluster binding"/>
    <property type="evidence" value="ECO:0007669"/>
    <property type="project" value="UniProtKB-KW"/>
</dbReference>
<dbReference type="GO" id="GO:0004031">
    <property type="term" value="F:aldehyde oxidase activity"/>
    <property type="evidence" value="ECO:0007669"/>
    <property type="project" value="UniProtKB-EC"/>
</dbReference>
<dbReference type="GO" id="GO:0071949">
    <property type="term" value="F:FAD binding"/>
    <property type="evidence" value="ECO:0007669"/>
    <property type="project" value="InterPro"/>
</dbReference>
<dbReference type="GO" id="GO:0005506">
    <property type="term" value="F:iron ion binding"/>
    <property type="evidence" value="ECO:0007669"/>
    <property type="project" value="InterPro"/>
</dbReference>
<dbReference type="GO" id="GO:0016491">
    <property type="term" value="F:oxidoreductase activity"/>
    <property type="evidence" value="ECO:0000318"/>
    <property type="project" value="GO_Central"/>
</dbReference>
<dbReference type="GO" id="GO:0030968">
    <property type="term" value="P:endoplasmic reticulum unfolded protein response"/>
    <property type="evidence" value="ECO:0007007"/>
    <property type="project" value="WormBase"/>
</dbReference>
<dbReference type="GO" id="GO:0036498">
    <property type="term" value="P:IRE1-mediated unfolded protein response"/>
    <property type="evidence" value="ECO:0007007"/>
    <property type="project" value="WormBase"/>
</dbReference>
<dbReference type="CDD" id="cd00207">
    <property type="entry name" value="fer2"/>
    <property type="match status" value="1"/>
</dbReference>
<dbReference type="FunFam" id="3.90.1170.50:FF:000009">
    <property type="entry name" value="Cytochrome P450"/>
    <property type="match status" value="1"/>
</dbReference>
<dbReference type="FunFam" id="1.10.150.120:FF:000008">
    <property type="entry name" value="Probable aldehyde oxidase gad-3"/>
    <property type="match status" value="1"/>
</dbReference>
<dbReference type="FunFam" id="3.30.465.10:FF:000067">
    <property type="entry name" value="Probable aldehyde oxidase gad-3"/>
    <property type="match status" value="1"/>
</dbReference>
<dbReference type="FunFam" id="3.30.365.10:FF:000001">
    <property type="entry name" value="Xanthine dehydrogenase oxidase"/>
    <property type="match status" value="1"/>
</dbReference>
<dbReference type="FunFam" id="3.30.365.10:FF:000002">
    <property type="entry name" value="Xanthine dehydrogenase oxidase"/>
    <property type="match status" value="1"/>
</dbReference>
<dbReference type="FunFam" id="3.10.20.30:FF:000012">
    <property type="entry name" value="Xanthine dehydrogenase/oxidase"/>
    <property type="match status" value="1"/>
</dbReference>
<dbReference type="Gene3D" id="3.10.20.30">
    <property type="match status" value="1"/>
</dbReference>
<dbReference type="Gene3D" id="3.30.465.10">
    <property type="match status" value="1"/>
</dbReference>
<dbReference type="Gene3D" id="1.10.150.120">
    <property type="entry name" value="[2Fe-2S]-binding domain"/>
    <property type="match status" value="1"/>
</dbReference>
<dbReference type="Gene3D" id="3.90.1170.50">
    <property type="entry name" value="Aldehyde oxidase/xanthine dehydrogenase, a/b hammerhead"/>
    <property type="match status" value="1"/>
</dbReference>
<dbReference type="Gene3D" id="3.30.365.10">
    <property type="entry name" value="Aldehyde oxidase/xanthine dehydrogenase, molybdopterin binding domain"/>
    <property type="match status" value="4"/>
</dbReference>
<dbReference type="InterPro" id="IPR002888">
    <property type="entry name" value="2Fe-2S-bd"/>
</dbReference>
<dbReference type="InterPro" id="IPR036884">
    <property type="entry name" value="2Fe-2S-bd_dom_sf"/>
</dbReference>
<dbReference type="InterPro" id="IPR036010">
    <property type="entry name" value="2Fe-2S_ferredoxin-like_sf"/>
</dbReference>
<dbReference type="InterPro" id="IPR001041">
    <property type="entry name" value="2Fe-2S_ferredoxin-type"/>
</dbReference>
<dbReference type="InterPro" id="IPR006058">
    <property type="entry name" value="2Fe2S_fd_BS"/>
</dbReference>
<dbReference type="InterPro" id="IPR000674">
    <property type="entry name" value="Ald_Oxase/Xan_DH_a/b"/>
</dbReference>
<dbReference type="InterPro" id="IPR036856">
    <property type="entry name" value="Ald_Oxase/Xan_DH_a/b_sf"/>
</dbReference>
<dbReference type="InterPro" id="IPR016208">
    <property type="entry name" value="Ald_Oxase/xanthine_DH-like"/>
</dbReference>
<dbReference type="InterPro" id="IPR008274">
    <property type="entry name" value="AldOxase/xan_DH_MoCoBD1"/>
</dbReference>
<dbReference type="InterPro" id="IPR046867">
    <property type="entry name" value="AldOxase/xan_DH_MoCoBD2"/>
</dbReference>
<dbReference type="InterPro" id="IPR037165">
    <property type="entry name" value="AldOxase/xan_DH_Mopterin-bd_sf"/>
</dbReference>
<dbReference type="InterPro" id="IPR012675">
    <property type="entry name" value="Beta-grasp_dom_sf"/>
</dbReference>
<dbReference type="InterPro" id="IPR016166">
    <property type="entry name" value="FAD-bd_PCMH"/>
</dbReference>
<dbReference type="InterPro" id="IPR036318">
    <property type="entry name" value="FAD-bd_PCMH-like_sf"/>
</dbReference>
<dbReference type="InterPro" id="IPR016169">
    <property type="entry name" value="FAD-bd_PCMH_sub2"/>
</dbReference>
<dbReference type="InterPro" id="IPR002346">
    <property type="entry name" value="Mopterin_DH_FAD-bd"/>
</dbReference>
<dbReference type="PANTHER" id="PTHR11908">
    <property type="entry name" value="XANTHINE DEHYDROGENASE"/>
    <property type="match status" value="1"/>
</dbReference>
<dbReference type="PANTHER" id="PTHR11908:SF139">
    <property type="entry name" value="XANTHINE DEHYDROGENASE-RELATED"/>
    <property type="match status" value="1"/>
</dbReference>
<dbReference type="Pfam" id="PF01315">
    <property type="entry name" value="Ald_Xan_dh_C"/>
    <property type="match status" value="1"/>
</dbReference>
<dbReference type="Pfam" id="PF00941">
    <property type="entry name" value="FAD_binding_5"/>
    <property type="match status" value="1"/>
</dbReference>
<dbReference type="Pfam" id="PF00111">
    <property type="entry name" value="Fer2"/>
    <property type="match status" value="1"/>
</dbReference>
<dbReference type="Pfam" id="PF01799">
    <property type="entry name" value="Fer2_2"/>
    <property type="match status" value="1"/>
</dbReference>
<dbReference type="Pfam" id="PF02738">
    <property type="entry name" value="MoCoBD_1"/>
    <property type="match status" value="1"/>
</dbReference>
<dbReference type="Pfam" id="PF20256">
    <property type="entry name" value="MoCoBD_2"/>
    <property type="match status" value="1"/>
</dbReference>
<dbReference type="PIRSF" id="PIRSF000127">
    <property type="entry name" value="Xanthine_DH"/>
    <property type="match status" value="1"/>
</dbReference>
<dbReference type="SMART" id="SM01008">
    <property type="entry name" value="Ald_Xan_dh_C"/>
    <property type="match status" value="1"/>
</dbReference>
<dbReference type="SUPFAM" id="SSF54292">
    <property type="entry name" value="2Fe-2S ferredoxin-like"/>
    <property type="match status" value="1"/>
</dbReference>
<dbReference type="SUPFAM" id="SSF47741">
    <property type="entry name" value="CO dehydrogenase ISP C-domain like"/>
    <property type="match status" value="1"/>
</dbReference>
<dbReference type="SUPFAM" id="SSF54665">
    <property type="entry name" value="CO dehydrogenase molybdoprotein N-domain-like"/>
    <property type="match status" value="1"/>
</dbReference>
<dbReference type="SUPFAM" id="SSF56176">
    <property type="entry name" value="FAD-binding/transporter-associated domain-like"/>
    <property type="match status" value="1"/>
</dbReference>
<dbReference type="SUPFAM" id="SSF56003">
    <property type="entry name" value="Molybdenum cofactor-binding domain"/>
    <property type="match status" value="1"/>
</dbReference>
<dbReference type="PROSITE" id="PS00197">
    <property type="entry name" value="2FE2S_FER_1"/>
    <property type="match status" value="1"/>
</dbReference>
<dbReference type="PROSITE" id="PS51387">
    <property type="entry name" value="FAD_PCMH"/>
    <property type="match status" value="1"/>
</dbReference>
<sequence>MPLTGIFFNVNGKDVNEENVDPELTLAYYLRNKLGLRGTKLGCEEGVCGSCTVVLGTWDDCQNKAVYRAVNACLVPLFHVHKTFVITVEGVGSRDKIHPIQDRMARGHALQCGFCSPGFVMSAYALFSNQPNPTIQQINAAIRANLCRCTGYRPILEALYSFSSESGGCCGGNKTGGGCCKDKSSSDEDGGYDEKLLSFNDFPKYDPTQEIIFPPSLRVFSDSETPVTLKGDRIELLLPKNIDQFKKFKKDRTVISSGLITRFVSTRNPKEFSQKWISTKYVKEFNEITVNKDSVVVGAALNIQKMADTLTSSLSINIGKEIDSFIQKFSSPQIANFATWTGAIISGAKSSLSVSDLLILFNVLDAKLTLLNNSGELTQVAIEEFAEKKLFATHTIVNAIFSRSLTGFLFCLKLGETSEQDSTNFNFAALVGNQVSRIFVGLGGQPKRLTSLEVHIDALKGLSVSDLCQTTEMSDYKNVKIALTRFSDFMNHKEKTEEIEGINYLQYFKPKTNESAGRPIANYFNERAITGEAFYVNDIQAYNAVHLGFVLSTVPHAEITKIDVSEALQLEGVAGYFGVSDVPGNNTPGLQISNMNFPDDTTIFADKKVESVGQVIGVIAANDVVLARRAAKLVKVEYKELPSLVNFKEAIEAKSLLGDVQHFGKDENLVKESLENSSKVLEGECDIGGQEHYYLETQSSLVIPGEGDELIVNCSTQGTSFTQLMVAETMKIPAHKIIVKTKRLGGGFGGKVNNASWIACMCAIVAKKLNRPTYGFLSRADDLAITGKRHEVHAKYRVGINFDGKIEGIHYQAWLNGGWSKDHSEGVTMVMGLMVDDVYNMGTIRFDGYPVKTNSNSNTALRGYGNPQSKLINEGVMRRIARDVGKSTEEIKRINFALEGGRRYLGGKIHNDALVECWEYCKKWSEFENRQSGIKQFNKNSTAVKRGIAMSSVRFGLPHPGPTGHGIASLLINLDGSVQLSIGGTEMGQGLNQKMLQVCSEALKRPIDTITIVDCSTDKVTNAPETGGSQNADTNGLAVLACCKKIMSRLQPIIDKNDGEWEKSIREAYGAYVPLQCTEYGTVERAKFGVGEMESPYNTTGACAVEMEIDTLTGYNRVIRVDIVMDVGESLNPALDIGQIEGAFIQGYGLVTCEKITFNKTTGQLDQNTAGKYKIPKASDVPKDFRVKLLGINNANGAQVYSSKGIGEPPLMMSCGAVHSSIMNCIDNWRNENGIHEFVDTISPLSAEKIQELCSKK</sequence>
<accession>Q960A1</accession>
<protein>
    <recommendedName>
        <fullName evidence="2">Probable aldehyde oxidase gad-3</fullName>
        <ecNumber evidence="2">1.2.3.1</ecNumber>
    </recommendedName>
</protein>